<gene>
    <name evidence="1" type="primary">cheD</name>
    <name type="ordered locus">Rru_A1407</name>
</gene>
<proteinExistence type="inferred from homology"/>
<protein>
    <recommendedName>
        <fullName evidence="1">Probable chemoreceptor glutamine deamidase CheD</fullName>
        <ecNumber evidence="1">3.5.1.44</ecNumber>
    </recommendedName>
</protein>
<accession>Q2RUI7</accession>
<organism>
    <name type="scientific">Rhodospirillum rubrum (strain ATCC 11170 / ATH 1.1.1 / DSM 467 / LMG 4362 / NCIMB 8255 / S1)</name>
    <dbReference type="NCBI Taxonomy" id="269796"/>
    <lineage>
        <taxon>Bacteria</taxon>
        <taxon>Pseudomonadati</taxon>
        <taxon>Pseudomonadota</taxon>
        <taxon>Alphaproteobacteria</taxon>
        <taxon>Rhodospirillales</taxon>
        <taxon>Rhodospirillaceae</taxon>
        <taxon>Rhodospirillum</taxon>
    </lineage>
</organism>
<reference key="1">
    <citation type="journal article" date="2011" name="Stand. Genomic Sci.">
        <title>Complete genome sequence of Rhodospirillum rubrum type strain (S1).</title>
        <authorList>
            <person name="Munk A.C."/>
            <person name="Copeland A."/>
            <person name="Lucas S."/>
            <person name="Lapidus A."/>
            <person name="Del Rio T.G."/>
            <person name="Barry K."/>
            <person name="Detter J.C."/>
            <person name="Hammon N."/>
            <person name="Israni S."/>
            <person name="Pitluck S."/>
            <person name="Brettin T."/>
            <person name="Bruce D."/>
            <person name="Han C."/>
            <person name="Tapia R."/>
            <person name="Gilna P."/>
            <person name="Schmutz J."/>
            <person name="Larimer F."/>
            <person name="Land M."/>
            <person name="Kyrpides N.C."/>
            <person name="Mavromatis K."/>
            <person name="Richardson P."/>
            <person name="Rohde M."/>
            <person name="Goeker M."/>
            <person name="Klenk H.P."/>
            <person name="Zhang Y."/>
            <person name="Roberts G.P."/>
            <person name="Reslewic S."/>
            <person name="Schwartz D.C."/>
        </authorList>
    </citation>
    <scope>NUCLEOTIDE SEQUENCE [LARGE SCALE GENOMIC DNA]</scope>
    <source>
        <strain>ATCC 11170 / ATH 1.1.1 / DSM 467 / LMG 4362 / NCIMB 8255 / S1</strain>
    </source>
</reference>
<comment type="function">
    <text evidence="1">Probably deamidates glutamine residues to glutamate on methyl-accepting chemotaxis receptors (MCPs), playing an important role in chemotaxis.</text>
</comment>
<comment type="catalytic activity">
    <reaction evidence="1">
        <text>L-glutaminyl-[protein] + H2O = L-glutamyl-[protein] + NH4(+)</text>
        <dbReference type="Rhea" id="RHEA:16441"/>
        <dbReference type="Rhea" id="RHEA-COMP:10207"/>
        <dbReference type="Rhea" id="RHEA-COMP:10208"/>
        <dbReference type="ChEBI" id="CHEBI:15377"/>
        <dbReference type="ChEBI" id="CHEBI:28938"/>
        <dbReference type="ChEBI" id="CHEBI:29973"/>
        <dbReference type="ChEBI" id="CHEBI:30011"/>
        <dbReference type="EC" id="3.5.1.44"/>
    </reaction>
</comment>
<comment type="similarity">
    <text evidence="1">Belongs to the CheD family.</text>
</comment>
<evidence type="ECO:0000255" key="1">
    <source>
        <dbReference type="HAMAP-Rule" id="MF_01440"/>
    </source>
</evidence>
<sequence>MVNSMPKPFLTPGTLYCGAAPAVISTVLGSCVAVCLIDRHNRAAGMNHFVLPHNPAGEDSLRYGDVALDRLHARMGELGCETKDLRAKVFGGAAVLPFGATGDSVGTKNVKIAIEWLHAQGIPTLARRTGGENGLLIRFYTATGRVLVRTIQSAITIDLGGISPAFDSRQSPFFQE</sequence>
<keyword id="KW-0145">Chemotaxis</keyword>
<keyword id="KW-0378">Hydrolase</keyword>
<keyword id="KW-1185">Reference proteome</keyword>
<feature type="chain" id="PRO_0000251062" description="Probable chemoreceptor glutamine deamidase CheD">
    <location>
        <begin position="1"/>
        <end position="176"/>
    </location>
</feature>
<name>CHED_RHORT</name>
<dbReference type="EC" id="3.5.1.44" evidence="1"/>
<dbReference type="EMBL" id="CP000230">
    <property type="protein sequence ID" value="ABC22208.1"/>
    <property type="molecule type" value="Genomic_DNA"/>
</dbReference>
<dbReference type="RefSeq" id="YP_426495.1">
    <property type="nucleotide sequence ID" value="NC_007643.1"/>
</dbReference>
<dbReference type="SMR" id="Q2RUI7"/>
<dbReference type="STRING" id="269796.Rru_A1407"/>
<dbReference type="EnsemblBacteria" id="ABC22208">
    <property type="protein sequence ID" value="ABC22208"/>
    <property type="gene ID" value="Rru_A1407"/>
</dbReference>
<dbReference type="KEGG" id="rru:Rru_A1407"/>
<dbReference type="PATRIC" id="fig|269796.9.peg.1477"/>
<dbReference type="eggNOG" id="COG1871">
    <property type="taxonomic scope" value="Bacteria"/>
</dbReference>
<dbReference type="HOGENOM" id="CLU_087854_1_2_5"/>
<dbReference type="PhylomeDB" id="Q2RUI7"/>
<dbReference type="Proteomes" id="UP000001929">
    <property type="component" value="Chromosome"/>
</dbReference>
<dbReference type="GO" id="GO:0050568">
    <property type="term" value="F:protein-glutamine glutaminase activity"/>
    <property type="evidence" value="ECO:0007669"/>
    <property type="project" value="UniProtKB-UniRule"/>
</dbReference>
<dbReference type="GO" id="GO:0006935">
    <property type="term" value="P:chemotaxis"/>
    <property type="evidence" value="ECO:0007669"/>
    <property type="project" value="UniProtKB-UniRule"/>
</dbReference>
<dbReference type="CDD" id="cd16352">
    <property type="entry name" value="CheD"/>
    <property type="match status" value="1"/>
</dbReference>
<dbReference type="Gene3D" id="3.30.1330.200">
    <property type="match status" value="1"/>
</dbReference>
<dbReference type="HAMAP" id="MF_01440">
    <property type="entry name" value="CheD"/>
    <property type="match status" value="1"/>
</dbReference>
<dbReference type="InterPro" id="IPR038592">
    <property type="entry name" value="CheD-like_sf"/>
</dbReference>
<dbReference type="InterPro" id="IPR005659">
    <property type="entry name" value="Chemorcpt_Glu_NH3ase_CheD"/>
</dbReference>
<dbReference type="InterPro" id="IPR011324">
    <property type="entry name" value="Cytotoxic_necrot_fac-like_cat"/>
</dbReference>
<dbReference type="PANTHER" id="PTHR35147">
    <property type="entry name" value="CHEMORECEPTOR GLUTAMINE DEAMIDASE CHED-RELATED"/>
    <property type="match status" value="1"/>
</dbReference>
<dbReference type="PANTHER" id="PTHR35147:SF1">
    <property type="entry name" value="CHEMORECEPTOR GLUTAMINE DEAMIDASE CHED-RELATED"/>
    <property type="match status" value="1"/>
</dbReference>
<dbReference type="Pfam" id="PF03975">
    <property type="entry name" value="CheD"/>
    <property type="match status" value="1"/>
</dbReference>
<dbReference type="SUPFAM" id="SSF64438">
    <property type="entry name" value="CNF1/YfiH-like putative cysteine hydrolases"/>
    <property type="match status" value="1"/>
</dbReference>